<feature type="chain" id="PRO_0000427865" description="Hypoxic response protein 1">
    <location>
        <begin position="1"/>
        <end position="143"/>
    </location>
</feature>
<feature type="domain" description="CBS 1" evidence="2">
    <location>
        <begin position="8"/>
        <end position="65"/>
    </location>
</feature>
<feature type="domain" description="CBS 2" evidence="2">
    <location>
        <begin position="73"/>
        <end position="131"/>
    </location>
</feature>
<feature type="binding site" evidence="1">
    <location>
        <position position="97"/>
    </location>
    <ligand>
        <name>Zn(2+)</name>
        <dbReference type="ChEBI" id="CHEBI:29105"/>
        <label>1</label>
    </ligand>
</feature>
<feature type="binding site" evidence="1">
    <location>
        <position position="122"/>
    </location>
    <ligand>
        <name>Zn(2+)</name>
        <dbReference type="ChEBI" id="CHEBI:29105"/>
        <label>2</label>
    </ligand>
</feature>
<feature type="disulfide bond" evidence="1">
    <location>
        <begin position="14"/>
        <end position="39"/>
    </location>
</feature>
<feature type="disulfide bond" description="Interchain" evidence="1">
    <location>
        <position position="136"/>
    </location>
</feature>
<reference key="1">
    <citation type="journal article" date="2002" name="J. Bacteriol.">
        <title>Whole-genome comparison of Mycobacterium tuberculosis clinical and laboratory strains.</title>
        <authorList>
            <person name="Fleischmann R.D."/>
            <person name="Alland D."/>
            <person name="Eisen J.A."/>
            <person name="Carpenter L."/>
            <person name="White O."/>
            <person name="Peterson J.D."/>
            <person name="DeBoy R.T."/>
            <person name="Dodson R.J."/>
            <person name="Gwinn M.L."/>
            <person name="Haft D.H."/>
            <person name="Hickey E.K."/>
            <person name="Kolonay J.F."/>
            <person name="Nelson W.C."/>
            <person name="Umayam L.A."/>
            <person name="Ermolaeva M.D."/>
            <person name="Salzberg S.L."/>
            <person name="Delcher A."/>
            <person name="Utterback T.R."/>
            <person name="Weidman J.F."/>
            <person name="Khouri H.M."/>
            <person name="Gill J."/>
            <person name="Mikula A."/>
            <person name="Bishai W."/>
            <person name="Jacobs W.R. Jr."/>
            <person name="Venter J.C."/>
            <person name="Fraser C.M."/>
        </authorList>
    </citation>
    <scope>NUCLEOTIDE SEQUENCE [LARGE SCALE GENOMIC DNA]</scope>
    <source>
        <strain>CDC 1551 / Oshkosh</strain>
    </source>
</reference>
<reference key="2">
    <citation type="journal article" date="2003" name="J. Exp. Med.">
        <title>Inhibition of respiration by nitric oxide induces a Mycobacterium tuberculosis dormancy program.</title>
        <authorList>
            <person name="Voskuil M.I."/>
            <person name="Schnappinger D."/>
            <person name="Visconti K.C."/>
            <person name="Harrell M.I."/>
            <person name="Dolganov G.M."/>
            <person name="Sherman D.R."/>
            <person name="Schoolnik G.K."/>
        </authorList>
    </citation>
    <scope>INDUCTION BY NITRIC OXIDE (NO); BY HYPOXIA; IN MOUSE MODEL AND DORMANCY REGULON</scope>
    <source>
        <strain>CDC 1551 / Oshkosh</strain>
    </source>
</reference>
<sequence length="143" mass="15518">MTTARDIMNAGVTCVGEHETLTAAAQYMREHDIGALPICGDDDRLHGMLTDRDIVIKGLAAGLDPNTATAGELARDSIYYVDANASIQEMLNVMEEHQVRRVPVISEHRLVGIVTEADIARHLPEHAIVQFVKAICSPMALAS</sequence>
<accession>P9WJA2</accession>
<accession>L0TBT6</accession>
<accession>O06186</accession>
<accession>Q7D6V4</accession>
<keyword id="KW-0129">CBS domain</keyword>
<keyword id="KW-1015">Disulfide bond</keyword>
<keyword id="KW-0479">Metal-binding</keyword>
<keyword id="KW-1185">Reference proteome</keyword>
<keyword id="KW-0677">Repeat</keyword>
<keyword id="KW-0964">Secreted</keyword>
<keyword id="KW-0862">Zinc</keyword>
<protein>
    <recommendedName>
        <fullName>Hypoxic response protein 1</fullName>
        <shortName>HRP1</shortName>
    </recommendedName>
</protein>
<gene>
    <name type="primary">hrp1</name>
    <name type="ordered locus">MT2701</name>
</gene>
<organism>
    <name type="scientific">Mycobacterium tuberculosis (strain CDC 1551 / Oshkosh)</name>
    <dbReference type="NCBI Taxonomy" id="83331"/>
    <lineage>
        <taxon>Bacteria</taxon>
        <taxon>Bacillati</taxon>
        <taxon>Actinomycetota</taxon>
        <taxon>Actinomycetes</taxon>
        <taxon>Mycobacteriales</taxon>
        <taxon>Mycobacteriaceae</taxon>
        <taxon>Mycobacterium</taxon>
        <taxon>Mycobacterium tuberculosis complex</taxon>
    </lineage>
</organism>
<proteinExistence type="evidence at transcript level"/>
<comment type="function">
    <text evidence="1">Unlike some other CBS-domain containing proteins does not seem to bind AMP.</text>
</comment>
<comment type="subunit">
    <text evidence="1">Homodimer.</text>
</comment>
<comment type="subcellular location">
    <subcellularLocation>
        <location evidence="1">Secreted</location>
    </subcellularLocation>
    <text evidence="1">Not seen to be associated with the cell wall.</text>
</comment>
<comment type="induction">
    <text evidence="3">A member of the dormancy regulon. Induced in response to reduced oxygen tension (hypoxia) and low levels of nitric oxide (NO).</text>
</comment>
<evidence type="ECO:0000250" key="1"/>
<evidence type="ECO:0000255" key="2">
    <source>
        <dbReference type="PROSITE-ProRule" id="PRU00703"/>
    </source>
</evidence>
<evidence type="ECO:0000269" key="3">
    <source>
    </source>
</evidence>
<dbReference type="EMBL" id="AE000516">
    <property type="protein sequence ID" value="AAK47017.1"/>
    <property type="molecule type" value="Genomic_DNA"/>
</dbReference>
<dbReference type="PIR" id="A70573">
    <property type="entry name" value="A70573"/>
</dbReference>
<dbReference type="RefSeq" id="WP_003413598.1">
    <property type="nucleotide sequence ID" value="NZ_KK341227.1"/>
</dbReference>
<dbReference type="SMR" id="P9WJA2"/>
<dbReference type="GeneID" id="45426630"/>
<dbReference type="KEGG" id="mtc:MT2701"/>
<dbReference type="PATRIC" id="fig|83331.31.peg.2912"/>
<dbReference type="HOGENOM" id="CLU_040681_12_0_11"/>
<dbReference type="Proteomes" id="UP000001020">
    <property type="component" value="Chromosome"/>
</dbReference>
<dbReference type="GO" id="GO:0005576">
    <property type="term" value="C:extracellular region"/>
    <property type="evidence" value="ECO:0007669"/>
    <property type="project" value="UniProtKB-SubCell"/>
</dbReference>
<dbReference type="GO" id="GO:0046872">
    <property type="term" value="F:metal ion binding"/>
    <property type="evidence" value="ECO:0007669"/>
    <property type="project" value="UniProtKB-KW"/>
</dbReference>
<dbReference type="CDD" id="cd04622">
    <property type="entry name" value="CBS_pair_HRP1_like"/>
    <property type="match status" value="1"/>
</dbReference>
<dbReference type="Gene3D" id="3.10.580.10">
    <property type="entry name" value="CBS-domain"/>
    <property type="match status" value="1"/>
</dbReference>
<dbReference type="InterPro" id="IPR000644">
    <property type="entry name" value="CBS_dom"/>
</dbReference>
<dbReference type="InterPro" id="IPR046342">
    <property type="entry name" value="CBS_dom_sf"/>
</dbReference>
<dbReference type="InterPro" id="IPR051257">
    <property type="entry name" value="Diverse_CBS-Domain"/>
</dbReference>
<dbReference type="PANTHER" id="PTHR43080:SF2">
    <property type="entry name" value="CBS DOMAIN-CONTAINING PROTEIN"/>
    <property type="match status" value="1"/>
</dbReference>
<dbReference type="PANTHER" id="PTHR43080">
    <property type="entry name" value="CBS DOMAIN-CONTAINING PROTEIN CBSX3, MITOCHONDRIAL"/>
    <property type="match status" value="1"/>
</dbReference>
<dbReference type="Pfam" id="PF00571">
    <property type="entry name" value="CBS"/>
    <property type="match status" value="2"/>
</dbReference>
<dbReference type="SMART" id="SM00116">
    <property type="entry name" value="CBS"/>
    <property type="match status" value="2"/>
</dbReference>
<dbReference type="SUPFAM" id="SSF54631">
    <property type="entry name" value="CBS-domain pair"/>
    <property type="match status" value="1"/>
</dbReference>
<dbReference type="PROSITE" id="PS51371">
    <property type="entry name" value="CBS"/>
    <property type="match status" value="2"/>
</dbReference>
<name>HRP1_MYCTO</name>